<reference key="1">
    <citation type="journal article" date="1999" name="Nature">
        <title>Sequence and analysis of chromosome 4 of the plant Arabidopsis thaliana.</title>
        <authorList>
            <person name="Mayer K.F.X."/>
            <person name="Schueller C."/>
            <person name="Wambutt R."/>
            <person name="Murphy G."/>
            <person name="Volckaert G."/>
            <person name="Pohl T."/>
            <person name="Duesterhoeft A."/>
            <person name="Stiekema W."/>
            <person name="Entian K.-D."/>
            <person name="Terryn N."/>
            <person name="Harris B."/>
            <person name="Ansorge W."/>
            <person name="Brandt P."/>
            <person name="Grivell L.A."/>
            <person name="Rieger M."/>
            <person name="Weichselgartner M."/>
            <person name="de Simone V."/>
            <person name="Obermaier B."/>
            <person name="Mache R."/>
            <person name="Mueller M."/>
            <person name="Kreis M."/>
            <person name="Delseny M."/>
            <person name="Puigdomenech P."/>
            <person name="Watson M."/>
            <person name="Schmidtheini T."/>
            <person name="Reichert B."/>
            <person name="Portetelle D."/>
            <person name="Perez-Alonso M."/>
            <person name="Boutry M."/>
            <person name="Bancroft I."/>
            <person name="Vos P."/>
            <person name="Hoheisel J."/>
            <person name="Zimmermann W."/>
            <person name="Wedler H."/>
            <person name="Ridley P."/>
            <person name="Langham S.-A."/>
            <person name="McCullagh B."/>
            <person name="Bilham L."/>
            <person name="Robben J."/>
            <person name="van der Schueren J."/>
            <person name="Grymonprez B."/>
            <person name="Chuang Y.-J."/>
            <person name="Vandenbussche F."/>
            <person name="Braeken M."/>
            <person name="Weltjens I."/>
            <person name="Voet M."/>
            <person name="Bastiaens I."/>
            <person name="Aert R."/>
            <person name="Defoor E."/>
            <person name="Weitzenegger T."/>
            <person name="Bothe G."/>
            <person name="Ramsperger U."/>
            <person name="Hilbert H."/>
            <person name="Braun M."/>
            <person name="Holzer E."/>
            <person name="Brandt A."/>
            <person name="Peters S."/>
            <person name="van Staveren M."/>
            <person name="Dirkse W."/>
            <person name="Mooijman P."/>
            <person name="Klein Lankhorst R."/>
            <person name="Rose M."/>
            <person name="Hauf J."/>
            <person name="Koetter P."/>
            <person name="Berneiser S."/>
            <person name="Hempel S."/>
            <person name="Feldpausch M."/>
            <person name="Lamberth S."/>
            <person name="Van den Daele H."/>
            <person name="De Keyser A."/>
            <person name="Buysshaert C."/>
            <person name="Gielen J."/>
            <person name="Villarroel R."/>
            <person name="De Clercq R."/>
            <person name="van Montagu M."/>
            <person name="Rogers J."/>
            <person name="Cronin A."/>
            <person name="Quail M.A."/>
            <person name="Bray-Allen S."/>
            <person name="Clark L."/>
            <person name="Doggett J."/>
            <person name="Hall S."/>
            <person name="Kay M."/>
            <person name="Lennard N."/>
            <person name="McLay K."/>
            <person name="Mayes R."/>
            <person name="Pettett A."/>
            <person name="Rajandream M.A."/>
            <person name="Lyne M."/>
            <person name="Benes V."/>
            <person name="Rechmann S."/>
            <person name="Borkova D."/>
            <person name="Bloecker H."/>
            <person name="Scharfe M."/>
            <person name="Grimm M."/>
            <person name="Loehnert T.-H."/>
            <person name="Dose S."/>
            <person name="de Haan M."/>
            <person name="Maarse A.C."/>
            <person name="Schaefer M."/>
            <person name="Mueller-Auer S."/>
            <person name="Gabel C."/>
            <person name="Fuchs M."/>
            <person name="Fartmann B."/>
            <person name="Granderath K."/>
            <person name="Dauner D."/>
            <person name="Herzl A."/>
            <person name="Neumann S."/>
            <person name="Argiriou A."/>
            <person name="Vitale D."/>
            <person name="Liguori R."/>
            <person name="Piravandi E."/>
            <person name="Massenet O."/>
            <person name="Quigley F."/>
            <person name="Clabauld G."/>
            <person name="Muendlein A."/>
            <person name="Felber R."/>
            <person name="Schnabl S."/>
            <person name="Hiller R."/>
            <person name="Schmidt W."/>
            <person name="Lecharny A."/>
            <person name="Aubourg S."/>
            <person name="Chefdor F."/>
            <person name="Cooke R."/>
            <person name="Berger C."/>
            <person name="Monfort A."/>
            <person name="Casacuberta E."/>
            <person name="Gibbons T."/>
            <person name="Weber N."/>
            <person name="Vandenbol M."/>
            <person name="Bargues M."/>
            <person name="Terol J."/>
            <person name="Torres A."/>
            <person name="Perez-Perez A."/>
            <person name="Purnelle B."/>
            <person name="Bent E."/>
            <person name="Johnson S."/>
            <person name="Tacon D."/>
            <person name="Jesse T."/>
            <person name="Heijnen L."/>
            <person name="Schwarz S."/>
            <person name="Scholler P."/>
            <person name="Heber S."/>
            <person name="Francs P."/>
            <person name="Bielke C."/>
            <person name="Frishman D."/>
            <person name="Haase D."/>
            <person name="Lemcke K."/>
            <person name="Mewes H.-W."/>
            <person name="Stocker S."/>
            <person name="Zaccaria P."/>
            <person name="Bevan M."/>
            <person name="Wilson R.K."/>
            <person name="de la Bastide M."/>
            <person name="Habermann K."/>
            <person name="Parnell L."/>
            <person name="Dedhia N."/>
            <person name="Gnoj L."/>
            <person name="Schutz K."/>
            <person name="Huang E."/>
            <person name="Spiegel L."/>
            <person name="Sekhon M."/>
            <person name="Murray J."/>
            <person name="Sheet P."/>
            <person name="Cordes M."/>
            <person name="Abu-Threideh J."/>
            <person name="Stoneking T."/>
            <person name="Kalicki J."/>
            <person name="Graves T."/>
            <person name="Harmon G."/>
            <person name="Edwards J."/>
            <person name="Latreille P."/>
            <person name="Courtney L."/>
            <person name="Cloud J."/>
            <person name="Abbott A."/>
            <person name="Scott K."/>
            <person name="Johnson D."/>
            <person name="Minx P."/>
            <person name="Bentley D."/>
            <person name="Fulton B."/>
            <person name="Miller N."/>
            <person name="Greco T."/>
            <person name="Kemp K."/>
            <person name="Kramer J."/>
            <person name="Fulton L."/>
            <person name="Mardis E."/>
            <person name="Dante M."/>
            <person name="Pepin K."/>
            <person name="Hillier L.W."/>
            <person name="Nelson J."/>
            <person name="Spieth J."/>
            <person name="Ryan E."/>
            <person name="Andrews S."/>
            <person name="Geisel C."/>
            <person name="Layman D."/>
            <person name="Du H."/>
            <person name="Ali J."/>
            <person name="Berghoff A."/>
            <person name="Jones K."/>
            <person name="Drone K."/>
            <person name="Cotton M."/>
            <person name="Joshu C."/>
            <person name="Antonoiu B."/>
            <person name="Zidanic M."/>
            <person name="Strong C."/>
            <person name="Sun H."/>
            <person name="Lamar B."/>
            <person name="Yordan C."/>
            <person name="Ma P."/>
            <person name="Zhong J."/>
            <person name="Preston R."/>
            <person name="Vil D."/>
            <person name="Shekher M."/>
            <person name="Matero A."/>
            <person name="Shah R."/>
            <person name="Swaby I.K."/>
            <person name="O'Shaughnessy A."/>
            <person name="Rodriguez M."/>
            <person name="Hoffman J."/>
            <person name="Till S."/>
            <person name="Granat S."/>
            <person name="Shohdy N."/>
            <person name="Hasegawa A."/>
            <person name="Hameed A."/>
            <person name="Lodhi M."/>
            <person name="Johnson A."/>
            <person name="Chen E."/>
            <person name="Marra M.A."/>
            <person name="Martienssen R."/>
            <person name="McCombie W.R."/>
        </authorList>
    </citation>
    <scope>NUCLEOTIDE SEQUENCE [LARGE SCALE GENOMIC DNA]</scope>
    <source>
        <strain>cv. Columbia</strain>
    </source>
</reference>
<reference key="2">
    <citation type="journal article" date="2017" name="Plant J.">
        <title>Araport11: a complete reannotation of the Arabidopsis thaliana reference genome.</title>
        <authorList>
            <person name="Cheng C.Y."/>
            <person name="Krishnakumar V."/>
            <person name="Chan A.P."/>
            <person name="Thibaud-Nissen F."/>
            <person name="Schobel S."/>
            <person name="Town C.D."/>
        </authorList>
    </citation>
    <scope>GENOME REANNOTATION</scope>
    <source>
        <strain>cv. Columbia</strain>
    </source>
</reference>
<reference key="3">
    <citation type="journal article" date="2003" name="Science">
        <title>Empirical analysis of transcriptional activity in the Arabidopsis genome.</title>
        <authorList>
            <person name="Yamada K."/>
            <person name="Lim J."/>
            <person name="Dale J.M."/>
            <person name="Chen H."/>
            <person name="Shinn P."/>
            <person name="Palm C.J."/>
            <person name="Southwick A.M."/>
            <person name="Wu H.C."/>
            <person name="Kim C.J."/>
            <person name="Nguyen M."/>
            <person name="Pham P.K."/>
            <person name="Cheuk R.F."/>
            <person name="Karlin-Newmann G."/>
            <person name="Liu S.X."/>
            <person name="Lam B."/>
            <person name="Sakano H."/>
            <person name="Wu T."/>
            <person name="Yu G."/>
            <person name="Miranda M."/>
            <person name="Quach H.L."/>
            <person name="Tripp M."/>
            <person name="Chang C.H."/>
            <person name="Lee J.M."/>
            <person name="Toriumi M.J."/>
            <person name="Chan M.M."/>
            <person name="Tang C.C."/>
            <person name="Onodera C.S."/>
            <person name="Deng J.M."/>
            <person name="Akiyama K."/>
            <person name="Ansari Y."/>
            <person name="Arakawa T."/>
            <person name="Banh J."/>
            <person name="Banno F."/>
            <person name="Bowser L."/>
            <person name="Brooks S.Y."/>
            <person name="Carninci P."/>
            <person name="Chao Q."/>
            <person name="Choy N."/>
            <person name="Enju A."/>
            <person name="Goldsmith A.D."/>
            <person name="Gurjal M."/>
            <person name="Hansen N.F."/>
            <person name="Hayashizaki Y."/>
            <person name="Johnson-Hopson C."/>
            <person name="Hsuan V.W."/>
            <person name="Iida K."/>
            <person name="Karnes M."/>
            <person name="Khan S."/>
            <person name="Koesema E."/>
            <person name="Ishida J."/>
            <person name="Jiang P.X."/>
            <person name="Jones T."/>
            <person name="Kawai J."/>
            <person name="Kamiya A."/>
            <person name="Meyers C."/>
            <person name="Nakajima M."/>
            <person name="Narusaka M."/>
            <person name="Seki M."/>
            <person name="Sakurai T."/>
            <person name="Satou M."/>
            <person name="Tamse R."/>
            <person name="Vaysberg M."/>
            <person name="Wallender E.K."/>
            <person name="Wong C."/>
            <person name="Yamamura Y."/>
            <person name="Yuan S."/>
            <person name="Shinozaki K."/>
            <person name="Davis R.W."/>
            <person name="Theologis A."/>
            <person name="Ecker J.R."/>
        </authorList>
    </citation>
    <scope>NUCLEOTIDE SEQUENCE [LARGE SCALE MRNA]</scope>
    <source>
        <strain>cv. Columbia</strain>
    </source>
</reference>
<comment type="cofactor">
    <cofactor evidence="4">
        <name>Cu cation</name>
        <dbReference type="ChEBI" id="CHEBI:23378"/>
    </cofactor>
</comment>
<comment type="subcellular location">
    <subcellularLocation>
        <location>Cell membrane</location>
        <topology>Lipid-anchor</topology>
        <topology>GPI-anchor</topology>
    </subcellularLocation>
</comment>
<comment type="similarity">
    <text evidence="4">Belongs to the multicopper oxidase family.</text>
</comment>
<comment type="sequence caution" evidence="4">
    <conflict type="erroneous gene model prediction">
        <sequence resource="EMBL-CDS" id="CAA23065"/>
    </conflict>
</comment>
<comment type="sequence caution" evidence="4">
    <conflict type="erroneous gene model prediction">
        <sequence resource="EMBL-CDS" id="CAB81335"/>
    </conflict>
</comment>
<feature type="signal peptide" evidence="2">
    <location>
        <begin position="1"/>
        <end position="24"/>
    </location>
</feature>
<feature type="chain" id="PRO_0000002963" description="Monocopper oxidase-like protein SKS1">
    <location>
        <begin position="25"/>
        <end position="563"/>
    </location>
</feature>
<feature type="propeptide" id="PRO_0000002964" description="Removed in mature form" evidence="2">
    <location>
        <begin position="564"/>
        <end position="589"/>
    </location>
</feature>
<feature type="region of interest" description="Disordered" evidence="3">
    <location>
        <begin position="322"/>
        <end position="356"/>
    </location>
</feature>
<feature type="compositionally biased region" description="Polar residues" evidence="3">
    <location>
        <begin position="328"/>
        <end position="349"/>
    </location>
</feature>
<feature type="binding site" description="type 2 copper site" evidence="1">
    <location>
        <position position="455"/>
    </location>
    <ligand>
        <name>Cu cation</name>
        <dbReference type="ChEBI" id="CHEBI:23378"/>
        <label>2</label>
    </ligand>
</feature>
<feature type="lipid moiety-binding region" description="GPI-anchor amidated serine" evidence="2">
    <location>
        <position position="563"/>
    </location>
</feature>
<feature type="glycosylation site" description="N-linked (GlcNAc...) asparagine" evidence="2">
    <location>
        <position position="62"/>
    </location>
</feature>
<feature type="glycosylation site" description="N-linked (GlcNAc...) asparagine" evidence="2">
    <location>
        <position position="111"/>
    </location>
</feature>
<feature type="glycosylation site" description="N-linked (GlcNAc...) asparagine" evidence="2">
    <location>
        <position position="204"/>
    </location>
</feature>
<feature type="glycosylation site" description="N-linked (GlcNAc...) asparagine" evidence="2">
    <location>
        <position position="243"/>
    </location>
</feature>
<feature type="glycosylation site" description="N-linked (GlcNAc...) asparagine" evidence="2">
    <location>
        <position position="260"/>
    </location>
</feature>
<feature type="glycosylation site" description="N-linked (GlcNAc...) asparagine" evidence="2">
    <location>
        <position position="296"/>
    </location>
</feature>
<feature type="glycosylation site" description="N-linked (GlcNAc...) asparagine" evidence="2">
    <location>
        <position position="345"/>
    </location>
</feature>
<feature type="glycosylation site" description="N-linked (GlcNAc...) asparagine" evidence="2">
    <location>
        <position position="365"/>
    </location>
</feature>
<feature type="glycosylation site" description="N-linked (GlcNAc...) asparagine" evidence="2">
    <location>
        <position position="433"/>
    </location>
</feature>
<feature type="glycosylation site" description="N-linked (GlcNAc...) asparagine" evidence="2">
    <location>
        <position position="447"/>
    </location>
</feature>
<proteinExistence type="evidence at transcript level"/>
<gene>
    <name type="primary">SKS1</name>
    <name type="ordered locus">At4g25240</name>
    <name type="ORF">F24A6.80</name>
</gene>
<keyword id="KW-1003">Cell membrane</keyword>
<keyword id="KW-0186">Copper</keyword>
<keyword id="KW-0325">Glycoprotein</keyword>
<keyword id="KW-0336">GPI-anchor</keyword>
<keyword id="KW-0449">Lipoprotein</keyword>
<keyword id="KW-0472">Membrane</keyword>
<keyword id="KW-0479">Metal-binding</keyword>
<keyword id="KW-1185">Reference proteome</keyword>
<keyword id="KW-0732">Signal</keyword>
<dbReference type="EMBL" id="AL035396">
    <property type="protein sequence ID" value="CAA23065.1"/>
    <property type="status" value="ALT_SEQ"/>
    <property type="molecule type" value="Genomic_DNA"/>
</dbReference>
<dbReference type="EMBL" id="AL161563">
    <property type="protein sequence ID" value="CAB81335.1"/>
    <property type="status" value="ALT_SEQ"/>
    <property type="molecule type" value="Genomic_DNA"/>
</dbReference>
<dbReference type="EMBL" id="CP002687">
    <property type="protein sequence ID" value="AEE85030.1"/>
    <property type="molecule type" value="Genomic_DNA"/>
</dbReference>
<dbReference type="EMBL" id="CP002687">
    <property type="protein sequence ID" value="ANM66973.1"/>
    <property type="molecule type" value="Genomic_DNA"/>
</dbReference>
<dbReference type="EMBL" id="AY074379">
    <property type="protein sequence ID" value="AAL67075.1"/>
    <property type="molecule type" value="mRNA"/>
</dbReference>
<dbReference type="EMBL" id="AY091230">
    <property type="protein sequence ID" value="AAM14169.1"/>
    <property type="molecule type" value="mRNA"/>
</dbReference>
<dbReference type="PIR" id="T05545">
    <property type="entry name" value="T05545"/>
</dbReference>
<dbReference type="RefSeq" id="NP_001320060.1">
    <property type="nucleotide sequence ID" value="NM_001341725.1"/>
</dbReference>
<dbReference type="RefSeq" id="NP_194254.2">
    <property type="nucleotide sequence ID" value="NM_118656.5"/>
</dbReference>
<dbReference type="SMR" id="Q8VXX5"/>
<dbReference type="BioGRID" id="13914">
    <property type="interactions" value="4"/>
</dbReference>
<dbReference type="FunCoup" id="Q8VXX5">
    <property type="interactions" value="62"/>
</dbReference>
<dbReference type="IntAct" id="Q8VXX5">
    <property type="interactions" value="2"/>
</dbReference>
<dbReference type="STRING" id="3702.Q8VXX5"/>
<dbReference type="GlyCosmos" id="Q8VXX5">
    <property type="glycosylation" value="10 sites, No reported glycans"/>
</dbReference>
<dbReference type="GlyGen" id="Q8VXX5">
    <property type="glycosylation" value="10 sites"/>
</dbReference>
<dbReference type="PaxDb" id="3702-AT4G25240.1"/>
<dbReference type="ProteomicsDB" id="232557"/>
<dbReference type="EnsemblPlants" id="AT4G25240.1">
    <property type="protein sequence ID" value="AT4G25240.1"/>
    <property type="gene ID" value="AT4G25240"/>
</dbReference>
<dbReference type="EnsemblPlants" id="AT4G25240.2">
    <property type="protein sequence ID" value="AT4G25240.2"/>
    <property type="gene ID" value="AT4G25240"/>
</dbReference>
<dbReference type="GeneID" id="828627"/>
<dbReference type="Gramene" id="AT4G25240.1">
    <property type="protein sequence ID" value="AT4G25240.1"/>
    <property type="gene ID" value="AT4G25240"/>
</dbReference>
<dbReference type="Gramene" id="AT4G25240.2">
    <property type="protein sequence ID" value="AT4G25240.2"/>
    <property type="gene ID" value="AT4G25240"/>
</dbReference>
<dbReference type="KEGG" id="ath:AT4G25240"/>
<dbReference type="Araport" id="AT4G25240"/>
<dbReference type="TAIR" id="AT4G25240">
    <property type="gene designation" value="SKS1"/>
</dbReference>
<dbReference type="eggNOG" id="KOG1263">
    <property type="taxonomic scope" value="Eukaryota"/>
</dbReference>
<dbReference type="HOGENOM" id="CLU_022744_2_1_1"/>
<dbReference type="InParanoid" id="Q8VXX5"/>
<dbReference type="OMA" id="MFSMLMA"/>
<dbReference type="PhylomeDB" id="Q8VXX5"/>
<dbReference type="PRO" id="PR:Q8VXX5"/>
<dbReference type="Proteomes" id="UP000006548">
    <property type="component" value="Chromosome 4"/>
</dbReference>
<dbReference type="ExpressionAtlas" id="Q8VXX5">
    <property type="expression patterns" value="baseline and differential"/>
</dbReference>
<dbReference type="GO" id="GO:0005829">
    <property type="term" value="C:cytosol"/>
    <property type="evidence" value="ECO:0007005"/>
    <property type="project" value="TAIR"/>
</dbReference>
<dbReference type="GO" id="GO:0005886">
    <property type="term" value="C:plasma membrane"/>
    <property type="evidence" value="ECO:0007005"/>
    <property type="project" value="TAIR"/>
</dbReference>
<dbReference type="GO" id="GO:0009506">
    <property type="term" value="C:plasmodesma"/>
    <property type="evidence" value="ECO:0007005"/>
    <property type="project" value="TAIR"/>
</dbReference>
<dbReference type="GO" id="GO:0098552">
    <property type="term" value="C:side of membrane"/>
    <property type="evidence" value="ECO:0007669"/>
    <property type="project" value="UniProtKB-KW"/>
</dbReference>
<dbReference type="GO" id="GO:0005507">
    <property type="term" value="F:copper ion binding"/>
    <property type="evidence" value="ECO:0007669"/>
    <property type="project" value="InterPro"/>
</dbReference>
<dbReference type="GO" id="GO:0016491">
    <property type="term" value="F:oxidoreductase activity"/>
    <property type="evidence" value="ECO:0007669"/>
    <property type="project" value="InterPro"/>
</dbReference>
<dbReference type="CDD" id="cd13846">
    <property type="entry name" value="CuRO_1_AAO_like_1"/>
    <property type="match status" value="1"/>
</dbReference>
<dbReference type="CDD" id="cd13872">
    <property type="entry name" value="CuRO_2_AAO_like_1"/>
    <property type="match status" value="1"/>
</dbReference>
<dbReference type="CDD" id="cd13894">
    <property type="entry name" value="CuRO_3_AAO_like_1"/>
    <property type="match status" value="1"/>
</dbReference>
<dbReference type="FunFam" id="2.60.40.420:FF:000012">
    <property type="entry name" value="Monocopper oxidase-like protein"/>
    <property type="match status" value="1"/>
</dbReference>
<dbReference type="FunFam" id="2.60.40.420:FF:000016">
    <property type="entry name" value="Monocopper oxidase-like protein"/>
    <property type="match status" value="1"/>
</dbReference>
<dbReference type="FunFam" id="2.60.40.420:FF:000023">
    <property type="entry name" value="Monocopper oxidase-like protein SKU5"/>
    <property type="match status" value="1"/>
</dbReference>
<dbReference type="Gene3D" id="2.60.40.420">
    <property type="entry name" value="Cupredoxins - blue copper proteins"/>
    <property type="match status" value="3"/>
</dbReference>
<dbReference type="InterPro" id="IPR011707">
    <property type="entry name" value="Cu-oxidase-like_N"/>
</dbReference>
<dbReference type="InterPro" id="IPR001117">
    <property type="entry name" value="Cu-oxidase_2nd"/>
</dbReference>
<dbReference type="InterPro" id="IPR011706">
    <property type="entry name" value="Cu-oxidase_C"/>
</dbReference>
<dbReference type="InterPro" id="IPR045087">
    <property type="entry name" value="Cu-oxidase_fam"/>
</dbReference>
<dbReference type="InterPro" id="IPR008972">
    <property type="entry name" value="Cupredoxin"/>
</dbReference>
<dbReference type="InterPro" id="IPR034273">
    <property type="entry name" value="CuRO_1_AAO-like"/>
</dbReference>
<dbReference type="InterPro" id="IPR034271">
    <property type="entry name" value="CuRO_2_AO-like"/>
</dbReference>
<dbReference type="InterPro" id="IPR034275">
    <property type="entry name" value="CuRO_3_AO-like"/>
</dbReference>
<dbReference type="PANTHER" id="PTHR11709:SF270">
    <property type="entry name" value="MONOCOPPER OXIDASE-LIKE PROTEIN SKS1"/>
    <property type="match status" value="1"/>
</dbReference>
<dbReference type="PANTHER" id="PTHR11709">
    <property type="entry name" value="MULTI-COPPER OXIDASE"/>
    <property type="match status" value="1"/>
</dbReference>
<dbReference type="Pfam" id="PF00394">
    <property type="entry name" value="Cu-oxidase"/>
    <property type="match status" value="1"/>
</dbReference>
<dbReference type="Pfam" id="PF07731">
    <property type="entry name" value="Cu-oxidase_2"/>
    <property type="match status" value="1"/>
</dbReference>
<dbReference type="Pfam" id="PF07732">
    <property type="entry name" value="Cu-oxidase_3"/>
    <property type="match status" value="1"/>
</dbReference>
<dbReference type="SUPFAM" id="SSF49503">
    <property type="entry name" value="Cupredoxins"/>
    <property type="match status" value="3"/>
</dbReference>
<name>SKS1_ARATH</name>
<protein>
    <recommendedName>
        <fullName>Monocopper oxidase-like protein SKS1</fullName>
    </recommendedName>
</protein>
<organism>
    <name type="scientific">Arabidopsis thaliana</name>
    <name type="common">Mouse-ear cress</name>
    <dbReference type="NCBI Taxonomy" id="3702"/>
    <lineage>
        <taxon>Eukaryota</taxon>
        <taxon>Viridiplantae</taxon>
        <taxon>Streptophyta</taxon>
        <taxon>Embryophyta</taxon>
        <taxon>Tracheophyta</taxon>
        <taxon>Spermatophyta</taxon>
        <taxon>Magnoliopsida</taxon>
        <taxon>eudicotyledons</taxon>
        <taxon>Gunneridae</taxon>
        <taxon>Pentapetalae</taxon>
        <taxon>rosids</taxon>
        <taxon>malvids</taxon>
        <taxon>Brassicales</taxon>
        <taxon>Brassicaceae</taxon>
        <taxon>Camelineae</taxon>
        <taxon>Arabidopsis</taxon>
    </lineage>
</organism>
<accession>Q8VXX5</accession>
<accession>Q9SB39</accession>
<evidence type="ECO:0000250" key="1"/>
<evidence type="ECO:0000255" key="2"/>
<evidence type="ECO:0000256" key="3">
    <source>
        <dbReference type="SAM" id="MobiDB-lite"/>
    </source>
</evidence>
<evidence type="ECO:0000305" key="4"/>
<sequence length="589" mass="65877">MAATCSLLASFLLCFALLSAVSFAADPFVSYDFRVSYLTASPLGVPQQVIAVNGQFPGPLLNATTNYNVVVNVFNHLDEPLLLTWPGIQMRRNSWQDGVLGTNCPIPPRWNFTYQFQVKDQIGSFFYSPSLNFQRASGGFGPIVINNRDIIPIPFPQPDGELIFIIGDWYTQDHKALRRALDSGKELGMPDGVLINGKGPYKYNSSVPDGIDYLTFHVEPGKTYRIRVHNVGISTSLNFRIQNHSLLLVETEGHYTSQANFTDFDVHVGQSYSFLVTMDQDATSDYYIVASARFVNETVWQRVTGVAILHYSNSKGPVSGPLPVPKTDVSSPWSAMSQPKTIRQNTSASGARPNPQGSFHYGQINITNTYILRSLPPTIINGALRATLNGISFVNPSTPVRLADRNKVKGAYKLDFPDRPFNRPLRLDRSMINATYKGFIQVVFQNNDTKIQSFHVDGYSFFVVGMDFGIWSEDKKGSYNNWDAISRSTIEVYPGGWTAVLISLDNVGVWNIRVENLDRWYLGEETYMRITNPEEDGKTEMDPPDNVLYCGALKNLQKEQHHSAATSILNGHLKLMLLMVLLASVFRFC</sequence>